<dbReference type="EMBL" id="AB014518">
    <property type="protein sequence ID" value="BAA31593.2"/>
    <property type="status" value="ALT_INIT"/>
    <property type="molecule type" value="mRNA"/>
</dbReference>
<dbReference type="EMBL" id="AK022555">
    <property type="protein sequence ID" value="BAB14097.1"/>
    <property type="status" value="ALT_INIT"/>
    <property type="molecule type" value="mRNA"/>
</dbReference>
<dbReference type="EMBL" id="AK292548">
    <property type="protein sequence ID" value="BAF85237.1"/>
    <property type="molecule type" value="mRNA"/>
</dbReference>
<dbReference type="EMBL" id="AC005488">
    <property type="status" value="NOT_ANNOTATED_CDS"/>
    <property type="molecule type" value="Genomic_DNA"/>
</dbReference>
<dbReference type="EMBL" id="BC001518">
    <property type="protein sequence ID" value="AAH01518.2"/>
    <property type="molecule type" value="mRNA"/>
</dbReference>
<dbReference type="EMBL" id="BC008794">
    <property type="protein sequence ID" value="AAH08794.1"/>
    <property type="molecule type" value="mRNA"/>
</dbReference>
<dbReference type="EMBL" id="AB289621">
    <property type="protein sequence ID" value="BAF80887.1"/>
    <property type="molecule type" value="mRNA"/>
</dbReference>
<dbReference type="EMBL" id="AL080109">
    <property type="protein sequence ID" value="CAB45713.1"/>
    <property type="molecule type" value="mRNA"/>
</dbReference>
<dbReference type="EMBL" id="AL713666">
    <property type="protein sequence ID" value="CAD28472.1"/>
    <property type="molecule type" value="mRNA"/>
</dbReference>
<dbReference type="CCDS" id="CCDS5542.1">
    <molecule id="Q96HA1-2"/>
</dbReference>
<dbReference type="CCDS" id="CCDS59059.1">
    <molecule id="Q96HA1-3"/>
</dbReference>
<dbReference type="CCDS" id="CCDS94112.1">
    <molecule id="Q96HA1-1"/>
</dbReference>
<dbReference type="RefSeq" id="NP_001244119.1">
    <molecule id="Q96HA1-3"/>
    <property type="nucleotide sequence ID" value="NM_001257190.3"/>
</dbReference>
<dbReference type="RefSeq" id="NP_001374614.1">
    <molecule id="Q96HA1-2"/>
    <property type="nucleotide sequence ID" value="NM_001387685.1"/>
</dbReference>
<dbReference type="RefSeq" id="NP_001374615.1">
    <molecule id="Q96HA1-2"/>
    <property type="nucleotide sequence ID" value="NM_001387686.1"/>
</dbReference>
<dbReference type="RefSeq" id="NP_001374616.1">
    <molecule id="Q96HA1-2"/>
    <property type="nucleotide sequence ID" value="NM_001387687.1"/>
</dbReference>
<dbReference type="RefSeq" id="NP_001374617.1">
    <molecule id="Q96HA1-2"/>
    <property type="nucleotide sequence ID" value="NM_001387688.1"/>
</dbReference>
<dbReference type="RefSeq" id="NP_001374618.1">
    <molecule id="Q96HA1-2"/>
    <property type="nucleotide sequence ID" value="NM_001387689.1"/>
</dbReference>
<dbReference type="RefSeq" id="NP_001374620.1">
    <molecule id="Q96HA1-1"/>
    <property type="nucleotide sequence ID" value="NM_001387691.1"/>
</dbReference>
<dbReference type="RefSeq" id="NP_001374624.1">
    <molecule id="Q96HA1-2"/>
    <property type="nucleotide sequence ID" value="NM_001387695.1"/>
</dbReference>
<dbReference type="RefSeq" id="NP_001374625.1">
    <molecule id="Q96HA1-2"/>
    <property type="nucleotide sequence ID" value="NM_001387696.1"/>
</dbReference>
<dbReference type="RefSeq" id="NP_001374626.1">
    <molecule id="Q96HA1-2"/>
    <property type="nucleotide sequence ID" value="NM_001387697.1"/>
</dbReference>
<dbReference type="RefSeq" id="NP_001374627.1">
    <molecule id="Q96HA1-2"/>
    <property type="nucleotide sequence ID" value="NM_001387698.1"/>
</dbReference>
<dbReference type="RefSeq" id="NP_001374628.1">
    <molecule id="Q96HA1-2"/>
    <property type="nucleotide sequence ID" value="NM_001387699.1"/>
</dbReference>
<dbReference type="RefSeq" id="NP_001374629.1">
    <molecule id="Q96HA1-2"/>
    <property type="nucleotide sequence ID" value="NM_001387700.1"/>
</dbReference>
<dbReference type="RefSeq" id="NP_742017.1">
    <molecule id="Q96HA1-2"/>
    <property type="nucleotide sequence ID" value="NM_172020.5"/>
</dbReference>
<dbReference type="RefSeq" id="XP_005250783.1">
    <property type="nucleotide sequence ID" value="XM_005250726.3"/>
</dbReference>
<dbReference type="RefSeq" id="XP_006716259.1">
    <property type="nucleotide sequence ID" value="XM_006716196.3"/>
</dbReference>
<dbReference type="RefSeq" id="XP_016868342.1">
    <property type="nucleotide sequence ID" value="XM_017012853.1"/>
</dbReference>
<dbReference type="RefSeq" id="XP_016868343.1">
    <property type="nucleotide sequence ID" value="XM_017012854.1"/>
</dbReference>
<dbReference type="PDB" id="5T6W">
    <property type="method" value="X-ray"/>
    <property type="resolution" value="1.90 A"/>
    <property type="chains" value="C=418-427"/>
</dbReference>
<dbReference type="PDBsum" id="5T6W"/>
<dbReference type="SMR" id="Q96HA1"/>
<dbReference type="BioGRID" id="115214">
    <property type="interactions" value="202"/>
</dbReference>
<dbReference type="ComplexPortal" id="CPX-873">
    <property type="entry name" value="Nuclear pore complex"/>
</dbReference>
<dbReference type="CORUM" id="Q96HA1"/>
<dbReference type="FunCoup" id="Q96HA1">
    <property type="interactions" value="3026"/>
</dbReference>
<dbReference type="IntAct" id="Q96HA1">
    <property type="interactions" value="129"/>
</dbReference>
<dbReference type="MINT" id="Q96HA1"/>
<dbReference type="STRING" id="9606.ENSP00000378687"/>
<dbReference type="TCDB" id="1.I.1.1.3">
    <property type="family name" value="the nuclear pore complex (npc) family"/>
</dbReference>
<dbReference type="GlyConnect" id="2909">
    <property type="glycosylation" value="1 O-GlcNAc glycan (3 sites)"/>
</dbReference>
<dbReference type="GlyCosmos" id="Q96HA1">
    <property type="glycosylation" value="26 sites, 1 glycan"/>
</dbReference>
<dbReference type="GlyGen" id="Q96HA1">
    <property type="glycosylation" value="16 sites, 1 O-linked glycan (13 sites)"/>
</dbReference>
<dbReference type="iPTMnet" id="Q96HA1"/>
<dbReference type="PhosphoSitePlus" id="Q96HA1"/>
<dbReference type="SwissPalm" id="Q96HA1"/>
<dbReference type="BioMuta" id="POM121"/>
<dbReference type="DMDM" id="205829302"/>
<dbReference type="jPOST" id="Q96HA1"/>
<dbReference type="MassIVE" id="Q96HA1"/>
<dbReference type="PaxDb" id="9606-ENSP00000378687"/>
<dbReference type="PeptideAtlas" id="Q96HA1"/>
<dbReference type="ProteomicsDB" id="2321"/>
<dbReference type="ProteomicsDB" id="76715">
    <molecule id="Q96HA1-1"/>
</dbReference>
<dbReference type="ProteomicsDB" id="76716">
    <molecule id="Q96HA1-2"/>
</dbReference>
<dbReference type="ProteomicsDB" id="76717">
    <molecule id="Q96HA1-3"/>
</dbReference>
<dbReference type="Pumba" id="Q96HA1"/>
<dbReference type="Antibodypedia" id="53550">
    <property type="antibodies" value="74 antibodies from 23 providers"/>
</dbReference>
<dbReference type="DNASU" id="9883"/>
<dbReference type="Ensembl" id="ENST00000395270.5">
    <molecule id="Q96HA1-3"/>
    <property type="protein sequence ID" value="ENSP00000378687.1"/>
    <property type="gene ID" value="ENSG00000196313.13"/>
</dbReference>
<dbReference type="Ensembl" id="ENST00000434423.5">
    <molecule id="Q96HA1-1"/>
    <property type="protein sequence ID" value="ENSP00000405562.2"/>
    <property type="gene ID" value="ENSG00000196313.13"/>
</dbReference>
<dbReference type="Ensembl" id="ENST00000627934.3">
    <molecule id="Q96HA1-2"/>
    <property type="protein sequence ID" value="ENSP00000486504.1"/>
    <property type="gene ID" value="ENSG00000196313.13"/>
</dbReference>
<dbReference type="GeneID" id="9883"/>
<dbReference type="KEGG" id="hsa:9883"/>
<dbReference type="MANE-Select" id="ENST00000434423.5">
    <property type="protein sequence ID" value="ENSP00000405562.2"/>
    <property type="RefSeq nucleotide sequence ID" value="NM_001387691.1"/>
    <property type="RefSeq protein sequence ID" value="NP_001374620.1"/>
</dbReference>
<dbReference type="UCSC" id="uc003twk.3">
    <molecule id="Q96HA1-1"/>
    <property type="organism name" value="human"/>
</dbReference>
<dbReference type="AGR" id="HGNC:19702"/>
<dbReference type="CTD" id="9883"/>
<dbReference type="DisGeNET" id="9883"/>
<dbReference type="GeneCards" id="POM121"/>
<dbReference type="HGNC" id="HGNC:19702">
    <property type="gene designation" value="POM121"/>
</dbReference>
<dbReference type="HPA" id="ENSG00000196313">
    <property type="expression patterns" value="Low tissue specificity"/>
</dbReference>
<dbReference type="MIM" id="615753">
    <property type="type" value="gene"/>
</dbReference>
<dbReference type="neXtProt" id="NX_Q96HA1"/>
<dbReference type="OpenTargets" id="ENSG00000196313"/>
<dbReference type="PharmGKB" id="PA134987951"/>
<dbReference type="VEuPathDB" id="HostDB:ENSG00000196313"/>
<dbReference type="eggNOG" id="ENOG502R5GW">
    <property type="taxonomic scope" value="Eukaryota"/>
</dbReference>
<dbReference type="GeneTree" id="ENSGT00940000153253"/>
<dbReference type="HOGENOM" id="CLU_011366_0_0_1"/>
<dbReference type="InParanoid" id="Q96HA1"/>
<dbReference type="OMA" id="AANFSTW"/>
<dbReference type="OrthoDB" id="6510268at2759"/>
<dbReference type="PAN-GO" id="Q96HA1">
    <property type="GO annotations" value="5 GO annotations based on evolutionary models"/>
</dbReference>
<dbReference type="PhylomeDB" id="Q96HA1"/>
<dbReference type="TreeFam" id="TF323517"/>
<dbReference type="PathwayCommons" id="Q96HA1"/>
<dbReference type="Reactome" id="R-HSA-1169408">
    <property type="pathway name" value="ISG15 antiviral mechanism"/>
</dbReference>
<dbReference type="Reactome" id="R-HSA-159227">
    <property type="pathway name" value="Transport of the SLBP independent Mature mRNA"/>
</dbReference>
<dbReference type="Reactome" id="R-HSA-159230">
    <property type="pathway name" value="Transport of the SLBP Dependant Mature mRNA"/>
</dbReference>
<dbReference type="Reactome" id="R-HSA-159231">
    <property type="pathway name" value="Transport of Mature mRNA Derived from an Intronless Transcript"/>
</dbReference>
<dbReference type="Reactome" id="R-HSA-159236">
    <property type="pathway name" value="Transport of Mature mRNA derived from an Intron-Containing Transcript"/>
</dbReference>
<dbReference type="Reactome" id="R-HSA-165054">
    <property type="pathway name" value="Rev-mediated nuclear export of HIV RNA"/>
</dbReference>
<dbReference type="Reactome" id="R-HSA-168271">
    <property type="pathway name" value="Transport of Ribonucleoproteins into the Host Nucleus"/>
</dbReference>
<dbReference type="Reactome" id="R-HSA-168276">
    <property type="pathway name" value="NS1 Mediated Effects on Host Pathways"/>
</dbReference>
<dbReference type="Reactome" id="R-HSA-168325">
    <property type="pathway name" value="Viral Messenger RNA Synthesis"/>
</dbReference>
<dbReference type="Reactome" id="R-HSA-168333">
    <property type="pathway name" value="NEP/NS2 Interacts with the Cellular Export Machinery"/>
</dbReference>
<dbReference type="Reactome" id="R-HSA-170822">
    <property type="pathway name" value="Regulation of Glucokinase by Glucokinase Regulatory Protein"/>
</dbReference>
<dbReference type="Reactome" id="R-HSA-180746">
    <property type="pathway name" value="Nuclear import of Rev protein"/>
</dbReference>
<dbReference type="Reactome" id="R-HSA-180910">
    <property type="pathway name" value="Vpr-mediated nuclear import of PICs"/>
</dbReference>
<dbReference type="Reactome" id="R-HSA-191859">
    <property type="pathway name" value="snRNP Assembly"/>
</dbReference>
<dbReference type="Reactome" id="R-HSA-3108214">
    <property type="pathway name" value="SUMOylation of DNA damage response and repair proteins"/>
</dbReference>
<dbReference type="Reactome" id="R-HSA-3232142">
    <property type="pathway name" value="SUMOylation of ubiquitinylation proteins"/>
</dbReference>
<dbReference type="Reactome" id="R-HSA-3301854">
    <property type="pathway name" value="Nuclear Pore Complex (NPC) Disassembly"/>
</dbReference>
<dbReference type="Reactome" id="R-HSA-3371453">
    <property type="pathway name" value="Regulation of HSF1-mediated heat shock response"/>
</dbReference>
<dbReference type="Reactome" id="R-HSA-4085377">
    <property type="pathway name" value="SUMOylation of SUMOylation proteins"/>
</dbReference>
<dbReference type="Reactome" id="R-HSA-4551638">
    <property type="pathway name" value="SUMOylation of chromatin organization proteins"/>
</dbReference>
<dbReference type="Reactome" id="R-HSA-4570464">
    <property type="pathway name" value="SUMOylation of RNA binding proteins"/>
</dbReference>
<dbReference type="Reactome" id="R-HSA-4615885">
    <property type="pathway name" value="SUMOylation of DNA replication proteins"/>
</dbReference>
<dbReference type="Reactome" id="R-HSA-5578749">
    <property type="pathway name" value="Transcriptional regulation by small RNAs"/>
</dbReference>
<dbReference type="Reactome" id="R-HSA-5619107">
    <property type="pathway name" value="Defective TPR may confer susceptibility towards thyroid papillary carcinoma (TPC)"/>
</dbReference>
<dbReference type="Reactome" id="R-HSA-6784531">
    <property type="pathway name" value="tRNA processing in the nucleus"/>
</dbReference>
<dbReference type="Reactome" id="R-HSA-9609690">
    <property type="pathway name" value="HCMV Early Events"/>
</dbReference>
<dbReference type="Reactome" id="R-HSA-9610379">
    <property type="pathway name" value="HCMV Late Events"/>
</dbReference>
<dbReference type="Reactome" id="R-HSA-9615933">
    <property type="pathway name" value="Postmitotic nuclear pore complex (NPC) reformation"/>
</dbReference>
<dbReference type="Reactome" id="R-HSA-9705671">
    <property type="pathway name" value="SARS-CoV-2 activates/modulates innate and adaptive immune responses"/>
</dbReference>
<dbReference type="SignaLink" id="Q96HA1"/>
<dbReference type="SIGNOR" id="Q96HA1"/>
<dbReference type="BioGRID-ORCS" id="9883">
    <property type="hits" value="49 hits in 1118 CRISPR screens"/>
</dbReference>
<dbReference type="CD-CODE" id="D6A53B8E">
    <property type="entry name" value="Nuclear pore complex"/>
</dbReference>
<dbReference type="ChiTaRS" id="POM121">
    <property type="organism name" value="human"/>
</dbReference>
<dbReference type="GeneWiki" id="POM121"/>
<dbReference type="GenomeRNAi" id="9883"/>
<dbReference type="Pharos" id="Q96HA1">
    <property type="development level" value="Tbio"/>
</dbReference>
<dbReference type="PRO" id="PR:Q96HA1"/>
<dbReference type="Proteomes" id="UP000005640">
    <property type="component" value="Chromosome 7"/>
</dbReference>
<dbReference type="RNAct" id="Q96HA1">
    <property type="molecule type" value="protein"/>
</dbReference>
<dbReference type="Bgee" id="ENSG00000196313">
    <property type="expression patterns" value="Expressed in granulocyte and 136 other cell types or tissues"/>
</dbReference>
<dbReference type="GO" id="GO:0005789">
    <property type="term" value="C:endoplasmic reticulum membrane"/>
    <property type="evidence" value="ECO:0007669"/>
    <property type="project" value="UniProtKB-SubCell"/>
</dbReference>
<dbReference type="GO" id="GO:0005635">
    <property type="term" value="C:nuclear envelope"/>
    <property type="evidence" value="ECO:0000314"/>
    <property type="project" value="ComplexPortal"/>
</dbReference>
<dbReference type="GO" id="GO:0031965">
    <property type="term" value="C:nuclear membrane"/>
    <property type="evidence" value="ECO:0000314"/>
    <property type="project" value="HPA"/>
</dbReference>
<dbReference type="GO" id="GO:0005643">
    <property type="term" value="C:nuclear pore"/>
    <property type="evidence" value="ECO:0000318"/>
    <property type="project" value="GO_Central"/>
</dbReference>
<dbReference type="GO" id="GO:0005654">
    <property type="term" value="C:nucleoplasm"/>
    <property type="evidence" value="ECO:0000314"/>
    <property type="project" value="HPA"/>
</dbReference>
<dbReference type="GO" id="GO:0008139">
    <property type="term" value="F:nuclear localization sequence binding"/>
    <property type="evidence" value="ECO:0000318"/>
    <property type="project" value="GO_Central"/>
</dbReference>
<dbReference type="GO" id="GO:0017056">
    <property type="term" value="F:structural constituent of nuclear pore"/>
    <property type="evidence" value="ECO:0000318"/>
    <property type="project" value="GO_Central"/>
</dbReference>
<dbReference type="GO" id="GO:0051028">
    <property type="term" value="P:mRNA transport"/>
    <property type="evidence" value="ECO:0007669"/>
    <property type="project" value="UniProtKB-KW"/>
</dbReference>
<dbReference type="GO" id="GO:0006913">
    <property type="term" value="P:nucleocytoplasmic transport"/>
    <property type="evidence" value="ECO:0000303"/>
    <property type="project" value="ComplexPortal"/>
</dbReference>
<dbReference type="GO" id="GO:0006606">
    <property type="term" value="P:protein import into nucleus"/>
    <property type="evidence" value="ECO:0000318"/>
    <property type="project" value="GO_Central"/>
</dbReference>
<dbReference type="GO" id="GO:0006405">
    <property type="term" value="P:RNA export from nucleus"/>
    <property type="evidence" value="ECO:0000318"/>
    <property type="project" value="GO_Central"/>
</dbReference>
<dbReference type="InterPro" id="IPR026054">
    <property type="entry name" value="Nucleoporin"/>
</dbReference>
<dbReference type="PANTHER" id="PTHR23193:SF47">
    <property type="entry name" value="NUCLEAR ENVELOPE PORE MEMBRANE PROTEIN POM 121"/>
    <property type="match status" value="1"/>
</dbReference>
<dbReference type="PANTHER" id="PTHR23193">
    <property type="entry name" value="NUCLEAR PORE COMPLEX PROTEIN NUP"/>
    <property type="match status" value="1"/>
</dbReference>
<dbReference type="Pfam" id="PF15229">
    <property type="entry name" value="POM121"/>
    <property type="match status" value="1"/>
</dbReference>
<organism>
    <name type="scientific">Homo sapiens</name>
    <name type="common">Human</name>
    <dbReference type="NCBI Taxonomy" id="9606"/>
    <lineage>
        <taxon>Eukaryota</taxon>
        <taxon>Metazoa</taxon>
        <taxon>Chordata</taxon>
        <taxon>Craniata</taxon>
        <taxon>Vertebrata</taxon>
        <taxon>Euteleostomi</taxon>
        <taxon>Mammalia</taxon>
        <taxon>Eutheria</taxon>
        <taxon>Euarchontoglires</taxon>
        <taxon>Primates</taxon>
        <taxon>Haplorrhini</taxon>
        <taxon>Catarrhini</taxon>
        <taxon>Hominidae</taxon>
        <taxon>Homo</taxon>
    </lineage>
</organism>
<feature type="chain" id="PRO_0000346773" description="Nuclear envelope pore membrane protein POM 121">
    <location>
        <begin position="1"/>
        <end position="1249"/>
    </location>
</feature>
<feature type="transmembrane region" description="Helical" evidence="3">
    <location>
        <begin position="35"/>
        <end position="55"/>
    </location>
</feature>
<feature type="region of interest" description="Required for targeting to the nucleus and nuclear pore complex">
    <location>
        <begin position="1"/>
        <end position="285"/>
    </location>
</feature>
<feature type="region of interest" description="Cisternal side" evidence="3">
    <location>
        <begin position="1"/>
        <end position="34"/>
    </location>
</feature>
<feature type="region of interest" description="Disordered" evidence="4">
    <location>
        <begin position="1"/>
        <end position="27"/>
    </location>
</feature>
<feature type="region of interest" description="Pore side" evidence="3">
    <location>
        <begin position="56"/>
        <end position="1249"/>
    </location>
</feature>
<feature type="region of interest" description="Disordered" evidence="4">
    <location>
        <begin position="136"/>
        <end position="220"/>
    </location>
</feature>
<feature type="region of interest" description="Disordered" evidence="4">
    <location>
        <begin position="319"/>
        <end position="530"/>
    </location>
</feature>
<feature type="region of interest" description="Disordered" evidence="4">
    <location>
        <begin position="602"/>
        <end position="776"/>
    </location>
</feature>
<feature type="region of interest" description="Disordered" evidence="4">
    <location>
        <begin position="959"/>
        <end position="986"/>
    </location>
</feature>
<feature type="region of interest" description="Disordered" evidence="4">
    <location>
        <begin position="1226"/>
        <end position="1249"/>
    </location>
</feature>
<feature type="compositionally biased region" description="Low complexity" evidence="4">
    <location>
        <begin position="1"/>
        <end position="10"/>
    </location>
</feature>
<feature type="compositionally biased region" description="Basic and acidic residues" evidence="4">
    <location>
        <begin position="11"/>
        <end position="25"/>
    </location>
</feature>
<feature type="compositionally biased region" description="Pro residues" evidence="4">
    <location>
        <begin position="168"/>
        <end position="190"/>
    </location>
</feature>
<feature type="compositionally biased region" description="Polar residues" evidence="4">
    <location>
        <begin position="405"/>
        <end position="423"/>
    </location>
</feature>
<feature type="compositionally biased region" description="Low complexity" evidence="4">
    <location>
        <begin position="432"/>
        <end position="445"/>
    </location>
</feature>
<feature type="compositionally biased region" description="Basic and acidic residues" evidence="4">
    <location>
        <begin position="450"/>
        <end position="462"/>
    </location>
</feature>
<feature type="compositionally biased region" description="Basic and acidic residues" evidence="4">
    <location>
        <begin position="472"/>
        <end position="486"/>
    </location>
</feature>
<feature type="compositionally biased region" description="Polar residues" evidence="4">
    <location>
        <begin position="491"/>
        <end position="502"/>
    </location>
</feature>
<feature type="compositionally biased region" description="Low complexity" evidence="4">
    <location>
        <begin position="635"/>
        <end position="652"/>
    </location>
</feature>
<feature type="compositionally biased region" description="Polar residues" evidence="4">
    <location>
        <begin position="683"/>
        <end position="696"/>
    </location>
</feature>
<feature type="compositionally biased region" description="Low complexity" evidence="4">
    <location>
        <begin position="712"/>
        <end position="726"/>
    </location>
</feature>
<feature type="compositionally biased region" description="Low complexity" evidence="4">
    <location>
        <begin position="749"/>
        <end position="770"/>
    </location>
</feature>
<feature type="compositionally biased region" description="Basic residues" evidence="4">
    <location>
        <begin position="1239"/>
        <end position="1249"/>
    </location>
</feature>
<feature type="modified residue" description="Phosphoserine" evidence="2">
    <location>
        <position position="94"/>
    </location>
</feature>
<feature type="modified residue" description="Phosphoserine" evidence="2">
    <location>
        <position position="345"/>
    </location>
</feature>
<feature type="modified residue" description="Phosphoserine" evidence="10">
    <location>
        <position position="351"/>
    </location>
</feature>
<feature type="modified residue" description="Phosphoserine" evidence="11">
    <location>
        <position position="371"/>
    </location>
</feature>
<feature type="modified residue" description="Phosphoserine" evidence="2">
    <location>
        <position position="393"/>
    </location>
</feature>
<feature type="modified residue" description="Phosphoserine" evidence="2">
    <location>
        <position position="396"/>
    </location>
</feature>
<feature type="splice variant" id="VSP_035010" description="In isoform 2 and isoform 3." evidence="6 7 8">
    <location>
        <begin position="1"/>
        <end position="265"/>
    </location>
</feature>
<feature type="splice variant" id="VSP_035011" description="In isoform 3." evidence="8">
    <original>SAALSFSIGAGSKTPGARQRLQARRQHTRKK</original>
    <variation>NTFAHQQEHSPRKGPNNLSKRKLLPAVRAQGLPRRGQASSFPTRKE</variation>
    <location>
        <begin position="1219"/>
        <end position="1249"/>
    </location>
</feature>
<feature type="sequence variant" id="VAR_045905" description="In dbSNP:rs3177261.">
    <original>A</original>
    <variation>G</variation>
    <location>
        <position position="1215"/>
    </location>
</feature>
<feature type="sequence conflict" description="In Ref. 3; BAF85237." evidence="9" ref="3">
    <original>K</original>
    <variation>E</variation>
    <location>
        <position position="689"/>
    </location>
</feature>
<feature type="sequence conflict" description="In Ref. 3; BAB14097." evidence="9" ref="3">
    <original>H</original>
    <variation>P</variation>
    <location>
        <position position="904"/>
    </location>
</feature>
<feature type="sequence conflict" description="In Ref. 3; BAB14097." evidence="9" ref="3">
    <original>A</original>
    <variation>T</variation>
    <location>
        <position position="971"/>
    </location>
</feature>
<feature type="sequence conflict" description="In Ref. 3; BAB14097." evidence="9" ref="3">
    <original>Y</original>
    <variation>H</variation>
    <location>
        <position position="1021"/>
    </location>
</feature>
<feature type="sequence conflict" description="In Ref. 3; BAF85237." evidence="9" ref="3">
    <original>I</original>
    <variation>T</variation>
    <location>
        <position position="1113"/>
    </location>
</feature>
<feature type="sequence conflict" description="In Ref. 1; BAA31593." evidence="9" ref="1">
    <original>L</original>
    <variation>P</variation>
    <location sequence="Q96HA1-3">
        <position position="985"/>
    </location>
</feature>
<accession>Q96HA1</accession>
<accession>A6NFS9</accession>
<accession>A8CDT4</accession>
<accession>A8K933</accession>
<accession>A8MXF9</accession>
<accession>O75115</accession>
<accession>Q96DI0</accession>
<accession>Q9H9X1</accession>
<accession>Q9Y2N3</accession>
<accession>Q9Y4S7</accession>
<evidence type="ECO:0000250" key="1"/>
<evidence type="ECO:0000250" key="2">
    <source>
        <dbReference type="UniProtKB" id="A8CG34"/>
    </source>
</evidence>
<evidence type="ECO:0000255" key="3"/>
<evidence type="ECO:0000256" key="4">
    <source>
        <dbReference type="SAM" id="MobiDB-lite"/>
    </source>
</evidence>
<evidence type="ECO:0000269" key="5">
    <source>
    </source>
</evidence>
<evidence type="ECO:0000303" key="6">
    <source>
    </source>
</evidence>
<evidence type="ECO:0000303" key="7">
    <source>
    </source>
</evidence>
<evidence type="ECO:0000303" key="8">
    <source>
    </source>
</evidence>
<evidence type="ECO:0000305" key="9"/>
<evidence type="ECO:0007744" key="10">
    <source>
    </source>
</evidence>
<evidence type="ECO:0007744" key="11">
    <source>
    </source>
</evidence>
<protein>
    <recommendedName>
        <fullName>Nuclear envelope pore membrane protein POM 121</fullName>
    </recommendedName>
    <alternativeName>
        <fullName>Nuclear envelope pore membrane protein POM 121A</fullName>
    </alternativeName>
    <alternativeName>
        <fullName>Nucleoporin Nup121</fullName>
    </alternativeName>
    <alternativeName>
        <fullName>Pore membrane protein of 121 kDa</fullName>
    </alternativeName>
</protein>
<name>P121A_HUMAN</name>
<proteinExistence type="evidence at protein level"/>
<gene>
    <name type="primary">POM121</name>
    <name type="synonym">KIAA0618</name>
    <name type="synonym">NUP121</name>
    <name type="synonym">POM121A</name>
</gene>
<keyword id="KW-0002">3D-structure</keyword>
<keyword id="KW-0025">Alternative splicing</keyword>
<keyword id="KW-0256">Endoplasmic reticulum</keyword>
<keyword id="KW-0472">Membrane</keyword>
<keyword id="KW-0509">mRNA transport</keyword>
<keyword id="KW-0906">Nuclear pore complex</keyword>
<keyword id="KW-0539">Nucleus</keyword>
<keyword id="KW-0597">Phosphoprotein</keyword>
<keyword id="KW-0653">Protein transport</keyword>
<keyword id="KW-1267">Proteomics identification</keyword>
<keyword id="KW-1185">Reference proteome</keyword>
<keyword id="KW-0677">Repeat</keyword>
<keyword id="KW-0811">Translocation</keyword>
<keyword id="KW-0812">Transmembrane</keyword>
<keyword id="KW-1133">Transmembrane helix</keyword>
<keyword id="KW-0813">Transport</keyword>
<comment type="function">
    <text evidence="5">Essential component of the nuclear pore complex (NPC). The repeat-containing domain may be involved in anchoring components of the pore complex to the pore membrane. When overexpressed in cells induces the formation of cytoplasmic annulate lamellae (AL).</text>
</comment>
<comment type="interaction">
    <interactant intactId="EBI-739990">
        <id>Q96HA1</id>
    </interactant>
    <interactant intactId="EBI-712648">
        <id>O95994</id>
        <label>AGR2</label>
    </interactant>
    <organismsDiffer>false</organismsDiffer>
    <experiments>4</experiments>
</comment>
<comment type="interaction">
    <interactant intactId="EBI-739990">
        <id>Q96HA1</id>
    </interactant>
    <interactant intactId="EBI-742887">
        <id>Q8TAP6</id>
        <label>CEP76</label>
    </interactant>
    <organismsDiffer>false</organismsDiffer>
    <experiments>3</experiments>
</comment>
<comment type="interaction">
    <interactant intactId="EBI-739990">
        <id>Q96HA1</id>
    </interactant>
    <interactant intactId="EBI-740459">
        <id>P51116</id>
        <label>FXR2</label>
    </interactant>
    <organismsDiffer>false</organismsDiffer>
    <experiments>4</experiments>
</comment>
<comment type="interaction">
    <interactant intactId="EBI-739990">
        <id>Q96HA1</id>
    </interactant>
    <interactant intactId="EBI-748420">
        <id>Q9NSC5</id>
        <label>HOMER3</label>
    </interactant>
    <organismsDiffer>false</organismsDiffer>
    <experiments>3</experiments>
</comment>
<comment type="interaction">
    <interactant intactId="EBI-739990">
        <id>Q96HA1</id>
    </interactant>
    <interactant intactId="EBI-10236271">
        <id>Q6ZW49-2</id>
        <label>PAXIP1</label>
    </interactant>
    <organismsDiffer>false</organismsDiffer>
    <experiments>3</experiments>
</comment>
<comment type="interaction">
    <interactant intactId="EBI-739990">
        <id>Q96HA1</id>
    </interactant>
    <interactant intactId="EBI-740322">
        <id>Q93062</id>
        <label>RBPMS</label>
    </interactant>
    <organismsDiffer>false</organismsDiffer>
    <experiments>4</experiments>
</comment>
<comment type="interaction">
    <interactant intactId="EBI-739990">
        <id>Q96HA1</id>
    </interactant>
    <interactant intactId="EBI-742397">
        <id>Q8IYF3</id>
        <label>TEX11</label>
    </interactant>
    <organismsDiffer>false</organismsDiffer>
    <experiments>4</experiments>
</comment>
<comment type="interaction">
    <interactant intactId="EBI-11956563">
        <id>Q96HA1-2</id>
    </interactant>
    <interactant intactId="EBI-712648">
        <id>O95994</id>
        <label>AGR2</label>
    </interactant>
    <organismsDiffer>false</organismsDiffer>
    <experiments>3</experiments>
</comment>
<comment type="interaction">
    <interactant intactId="EBI-11956563">
        <id>Q96HA1-2</id>
    </interactant>
    <interactant intactId="EBI-11978055">
        <id>Q10567-3</id>
        <label>AP1B1</label>
    </interactant>
    <organismsDiffer>false</organismsDiffer>
    <experiments>3</experiments>
</comment>
<comment type="interaction">
    <interactant intactId="EBI-11956563">
        <id>Q96HA1-2</id>
    </interactant>
    <interactant intactId="EBI-11529439">
        <id>P63010-2</id>
        <label>AP2B1</label>
    </interactant>
    <organismsDiffer>false</organismsDiffer>
    <experiments>3</experiments>
</comment>
<comment type="interaction">
    <interactant intactId="EBI-11956563">
        <id>Q96HA1-2</id>
    </interactant>
    <interactant intactId="EBI-930964">
        <id>P54253</id>
        <label>ATXN1</label>
    </interactant>
    <organismsDiffer>false</organismsDiffer>
    <experiments>3</experiments>
</comment>
<comment type="interaction">
    <interactant intactId="EBI-11956563">
        <id>Q96HA1-2</id>
    </interactant>
    <interactant intactId="EBI-11983447">
        <id>Q8N9W6-4</id>
        <label>BOLL</label>
    </interactant>
    <organismsDiffer>false</organismsDiffer>
    <experiments>3</experiments>
</comment>
<comment type="interaction">
    <interactant intactId="EBI-11956563">
        <id>Q96HA1-2</id>
    </interactant>
    <interactant intactId="EBI-10961624">
        <id>Q2TAC2-2</id>
        <label>CCDC57</label>
    </interactant>
    <organismsDiffer>false</organismsDiffer>
    <experiments>3</experiments>
</comment>
<comment type="interaction">
    <interactant intactId="EBI-11956563">
        <id>Q96HA1-2</id>
    </interactant>
    <interactant intactId="EBI-4314501">
        <id>P40199</id>
        <label>CEACAM6</label>
    </interactant>
    <organismsDiffer>false</organismsDiffer>
    <experiments>3</experiments>
</comment>
<comment type="interaction">
    <interactant intactId="EBI-11956563">
        <id>Q96HA1-2</id>
    </interactant>
    <interactant intactId="EBI-742887">
        <id>Q8TAP6</id>
        <label>CEP76</label>
    </interactant>
    <organismsDiffer>false</organismsDiffer>
    <experiments>3</experiments>
</comment>
<comment type="interaction">
    <interactant intactId="EBI-11956563">
        <id>Q96HA1-2</id>
    </interactant>
    <interactant intactId="EBI-3866319">
        <id>Q9Y2V7</id>
        <label>COG6</label>
    </interactant>
    <organismsDiffer>false</organismsDiffer>
    <experiments>3</experiments>
</comment>
<comment type="interaction">
    <interactant intactId="EBI-11956563">
        <id>Q96HA1-2</id>
    </interactant>
    <interactant intactId="EBI-12193763">
        <id>A1KXE4-2</id>
        <label>FAM168B</label>
    </interactant>
    <organismsDiffer>false</organismsDiffer>
    <experiments>3</experiments>
</comment>
<comment type="interaction">
    <interactant intactId="EBI-11956563">
        <id>Q96HA1-2</id>
    </interactant>
    <interactant intactId="EBI-618309">
        <id>Q08379</id>
        <label>GOLGA2</label>
    </interactant>
    <organismsDiffer>false</organismsDiffer>
    <experiments>3</experiments>
</comment>
<comment type="interaction">
    <interactant intactId="EBI-11956563">
        <id>Q96HA1-2</id>
    </interactant>
    <interactant intactId="EBI-748420">
        <id>Q9NSC5</id>
        <label>HOMER3</label>
    </interactant>
    <organismsDiffer>false</organismsDiffer>
    <experiments>3</experiments>
</comment>
<comment type="interaction">
    <interactant intactId="EBI-11956563">
        <id>Q96HA1-2</id>
    </interactant>
    <interactant intactId="EBI-9090173">
        <id>P0C870</id>
        <label>JMJD7</label>
    </interactant>
    <organismsDiffer>false</organismsDiffer>
    <experiments>3</experiments>
</comment>
<comment type="interaction">
    <interactant intactId="EBI-11956563">
        <id>Q96HA1-2</id>
    </interactant>
    <interactant intactId="EBI-359923">
        <id>O60684</id>
        <label>KPNA6</label>
    </interactant>
    <organismsDiffer>false</organismsDiffer>
    <experiments>3</experiments>
</comment>
<comment type="interaction">
    <interactant intactId="EBI-11956563">
        <id>Q96HA1-2</id>
    </interactant>
    <interactant intactId="EBI-744222">
        <id>O60711</id>
        <label>LPXN</label>
    </interactant>
    <organismsDiffer>false</organismsDiffer>
    <experiments>3</experiments>
</comment>
<comment type="interaction">
    <interactant intactId="EBI-11956563">
        <id>Q96HA1-2</id>
    </interactant>
    <interactant intactId="EBI-716006">
        <id>Q9Y5V3</id>
        <label>MAGED1</label>
    </interactant>
    <organismsDiffer>false</organismsDiffer>
    <experiments>3</experiments>
</comment>
<comment type="interaction">
    <interactant intactId="EBI-11956563">
        <id>Q96HA1-2</id>
    </interactant>
    <interactant intactId="EBI-12835568">
        <id>Q5VZ52</id>
        <label>MORN5</label>
    </interactant>
    <organismsDiffer>false</organismsDiffer>
    <experiments>3</experiments>
</comment>
<comment type="interaction">
    <interactant intactId="EBI-11956563">
        <id>Q96HA1-2</id>
    </interactant>
    <interactant intactId="EBI-307386">
        <id>P25963</id>
        <label>NFKBIA</label>
    </interactant>
    <organismsDiffer>false</organismsDiffer>
    <experiments>3</experiments>
</comment>
<comment type="interaction">
    <interactant intactId="EBI-11956563">
        <id>Q96HA1-2</id>
    </interactant>
    <interactant intactId="EBI-11960139">
        <id>Q7L8S5</id>
        <label>OTUD6A</label>
    </interactant>
    <organismsDiffer>false</organismsDiffer>
    <experiments>3</experiments>
</comment>
<comment type="interaction">
    <interactant intactId="EBI-11956563">
        <id>Q96HA1-2</id>
    </interactant>
    <interactant intactId="EBI-413317">
        <id>Q96R06</id>
        <label>SPAG5</label>
    </interactant>
    <organismsDiffer>false</organismsDiffer>
    <experiments>3</experiments>
</comment>
<comment type="interaction">
    <interactant intactId="EBI-11956563">
        <id>Q96HA1-2</id>
    </interactant>
    <interactant intactId="EBI-518675">
        <id>P40763</id>
        <label>STAT3</label>
    </interactant>
    <organismsDiffer>false</organismsDiffer>
    <experiments>3</experiments>
</comment>
<comment type="interaction">
    <interactant intactId="EBI-11956563">
        <id>Q96HA1-2</id>
    </interactant>
    <interactant intactId="EBI-1105213">
        <id>Q9UBB9</id>
        <label>TFIP11</label>
    </interactant>
    <organismsDiffer>false</organismsDiffer>
    <experiments>3</experiments>
</comment>
<comment type="interaction">
    <interactant intactId="EBI-11956563">
        <id>Q96HA1-2</id>
    </interactant>
    <interactant intactId="EBI-355744">
        <id>Q12933</id>
        <label>TRAF2</label>
    </interactant>
    <organismsDiffer>false</organismsDiffer>
    <experiments>3</experiments>
</comment>
<comment type="interaction">
    <interactant intactId="EBI-11956563">
        <id>Q96HA1-2</id>
    </interactant>
    <interactant intactId="EBI-357631">
        <id>Q13114</id>
        <label>TRAF3</label>
    </interactant>
    <organismsDiffer>false</organismsDiffer>
    <experiments>3</experiments>
</comment>
<comment type="interaction">
    <interactant intactId="EBI-11956563">
        <id>Q96HA1-2</id>
    </interactant>
    <interactant intactId="EBI-740098">
        <id>P36406</id>
        <label>TRIM23</label>
    </interactant>
    <organismsDiffer>false</organismsDiffer>
    <experiments>3</experiments>
</comment>
<comment type="interaction">
    <interactant intactId="EBI-11956563">
        <id>Q96HA1-2</id>
    </interactant>
    <interactant intactId="EBI-719493">
        <id>P14373</id>
        <label>TRIM27</label>
    </interactant>
    <organismsDiffer>false</organismsDiffer>
    <experiments>3</experiments>
</comment>
<comment type="interaction">
    <interactant intactId="EBI-11956563">
        <id>Q96HA1-2</id>
    </interactant>
    <interactant intactId="EBI-6427421">
        <id>P0CI25</id>
        <label>TRIM49</label>
    </interactant>
    <organismsDiffer>false</organismsDiffer>
    <experiments>3</experiments>
</comment>
<comment type="interaction">
    <interactant intactId="EBI-11956563">
        <id>Q96HA1-2</id>
    </interactant>
    <interactant intactId="EBI-742327">
        <id>Q15654</id>
        <label>TRIP6</label>
    </interactant>
    <organismsDiffer>false</organismsDiffer>
    <experiments>3</experiments>
</comment>
<comment type="interaction">
    <interactant intactId="EBI-11956563">
        <id>Q96HA1-2</id>
    </interactant>
    <interactant intactId="EBI-947187">
        <id>Q9UHD9</id>
        <label>UBQLN2</label>
    </interactant>
    <organismsDiffer>false</organismsDiffer>
    <experiments>3</experiments>
</comment>
<comment type="interaction">
    <interactant intactId="EBI-11956563">
        <id>Q96HA1-2</id>
    </interactant>
    <interactant intactId="EBI-12030590">
        <id>Q9H0C1</id>
        <label>ZMYND12</label>
    </interactant>
    <organismsDiffer>false</organismsDiffer>
    <experiments>3</experiments>
</comment>
<comment type="subcellular location">
    <subcellularLocation>
        <location evidence="5">Nucleus</location>
        <location evidence="5">Nuclear pore complex</location>
    </subcellularLocation>
    <subcellularLocation>
        <location evidence="5">Nucleus membrane</location>
        <topology evidence="5">Single-pass membrane protein</topology>
    </subcellularLocation>
    <subcellularLocation>
        <location evidence="1">Endoplasmic reticulum membrane</location>
        <topology evidence="1">Single-pass membrane protein</topology>
    </subcellularLocation>
    <text evidence="1">Stably associated with the NPC throughout interphase and the endoplasmic reticulum during metaphase.</text>
</comment>
<comment type="alternative products">
    <event type="alternative splicing"/>
    <isoform>
        <id>Q96HA1-1</id>
        <name>1</name>
        <sequence type="displayed"/>
    </isoform>
    <isoform>
        <id>Q96HA1-2</id>
        <name>2</name>
        <sequence type="described" ref="VSP_035010"/>
    </isoform>
    <isoform>
        <id>Q96HA1-3</id>
        <name>3</name>
        <sequence type="described" ref="VSP_035010 VSP_035011"/>
    </isoform>
</comment>
<comment type="domain">
    <text>Contains F-X-F-G repeats.</text>
</comment>
<comment type="similarity">
    <text evidence="9">Belongs to the POM121 family.</text>
</comment>
<comment type="sequence caution" evidence="9">
    <conflict type="erroneous initiation">
        <sequence resource="EMBL-CDS" id="BAA31593"/>
    </conflict>
</comment>
<comment type="sequence caution" evidence="9">
    <conflict type="erroneous initiation">
        <sequence resource="EMBL-CDS" id="BAB14097"/>
    </conflict>
</comment>
<sequence>MSPAAAAAGAGERRRPIASVRDGRGRGCGGPARAVLLGLSLVGLLLYLVPAAAALAWLTVGATAAWWGLSREPRGSRPLSSFVRKARHRRPLSSFVRKARHRRTLFASPLAKSTANGNLLEPRTLLEGPDPAELLLMGSYLGKPGPPQPAAAPEGQDLRDRPGRRPPARPAPRSPPPRSPPPRSPPPSPPTHRAHHVYPSLPTPLLRPSRRPSPRDCGTLPNRFVITPRRRYPIHQAQYSCLGVLPTVCWNGYHKKAVLSPRNSRMVCSPVTVRIAPPDRRFSRSAIPEQIISSTLSSPSSNAPDPCAKETVLSALKEKEKKRTVEEEDQIFLDGQENKRRRHDSSGSGHSAFEPLVANGVPASFVPKPGSLKRGLNSQSSDDHLNKRSRSSSMSSLTGAYASGIPSSSRNAITSSYSSTRGISQLWKRNGPSSSPFSSPASSRSQTPERPAKKIREEELCHHSSSSTPLAADRESQGEKAADTTPRKKQNSNSQSTPGSSGQRKRKVQLLPSRRGEQLTLPPPPQLGYSITAEDLDLEKKASLQWFNQALEDKSDAASNSVTETPPITQPSFTFTLPAAAPASPPTSLLAPSTNPLLESLKKMQTPPSLPPCPESAGAATTEALSPPKTPSLLPPLGLSQSGPPGLLPSPSFDSKPPTTLLGLIPAPSMVPATDTKAPPTLQAETATKPQATSAPSPAPKQSFLFGTQNTSPSSPAAPAASSAPPMFKPIFTAPPKSEKEGPTPPGPSVTATAPSSSSLPTTTSTTAPTFQPVFSSMGPPASVPLPAPFFKQTTTPATAPTTTAPLFTGLASATSAVAPITSASPSTDSASKPAFGFGINSVSSSSVSTTTSTATAASQPFLFGAPQASAASFTPAMGSIFQFGKPPALPTTTTVTTFSQSLHTAVPTATSSSAADFSGFGSTLATSAPATSSQPTLTFSNTSTPTFNIPFGSSAKSPLPSYPGANPQPAFGAAEGQPPGAAKPALAPSFGSSFTFGNSAAPAAAPTPAPPSMIKVVPAYVPTPIHPIFGGATHSAFGLKATASAFGAPASSQPAFGGSTAVFFGAATSSGFGATTQTASSGSSSSVFGSTTPSPFTFGGSAAPAGSGSFGINVATPGSSTTTGAFSFGAGQSGSTATSTPFAGGLGQNALGTTGQSTPFAFNVSSTTESKPVFGGTATPTFGLNTPAPGVGTSGSSLSFGASSAPAQGFVGVAPFGSAALSFSIGAGSKTPGARQRLQARRQHTRKK</sequence>
<reference key="1">
    <citation type="journal article" date="1998" name="DNA Res.">
        <title>Prediction of the coding sequences of unidentified human genes. X. The complete sequences of 100 new cDNA clones from brain which can code for large proteins in vitro.</title>
        <authorList>
            <person name="Ishikawa K."/>
            <person name="Nagase T."/>
            <person name="Suyama M."/>
            <person name="Miyajima N."/>
            <person name="Tanaka A."/>
            <person name="Kotani H."/>
            <person name="Nomura N."/>
            <person name="Ohara O."/>
        </authorList>
    </citation>
    <scope>NUCLEOTIDE SEQUENCE [LARGE SCALE MRNA] (ISOFORM 3)</scope>
    <source>
        <tissue>Brain</tissue>
    </source>
</reference>
<reference key="2">
    <citation type="submission" date="2004-01" db="EMBL/GenBank/DDBJ databases">
        <authorList>
            <person name="Ohara O."/>
            <person name="Suyama M."/>
            <person name="Nagase T."/>
            <person name="Ishikawa K."/>
        </authorList>
    </citation>
    <scope>SEQUENCE REVISION</scope>
</reference>
<reference key="3">
    <citation type="journal article" date="2004" name="Nat. Genet.">
        <title>Complete sequencing and characterization of 21,243 full-length human cDNAs.</title>
        <authorList>
            <person name="Ota T."/>
            <person name="Suzuki Y."/>
            <person name="Nishikawa T."/>
            <person name="Otsuki T."/>
            <person name="Sugiyama T."/>
            <person name="Irie R."/>
            <person name="Wakamatsu A."/>
            <person name="Hayashi K."/>
            <person name="Sato H."/>
            <person name="Nagai K."/>
            <person name="Kimura K."/>
            <person name="Makita H."/>
            <person name="Sekine M."/>
            <person name="Obayashi M."/>
            <person name="Nishi T."/>
            <person name="Shibahara T."/>
            <person name="Tanaka T."/>
            <person name="Ishii S."/>
            <person name="Yamamoto J."/>
            <person name="Saito K."/>
            <person name="Kawai Y."/>
            <person name="Isono Y."/>
            <person name="Nakamura Y."/>
            <person name="Nagahari K."/>
            <person name="Murakami K."/>
            <person name="Yasuda T."/>
            <person name="Iwayanagi T."/>
            <person name="Wagatsuma M."/>
            <person name="Shiratori A."/>
            <person name="Sudo H."/>
            <person name="Hosoiri T."/>
            <person name="Kaku Y."/>
            <person name="Kodaira H."/>
            <person name="Kondo H."/>
            <person name="Sugawara M."/>
            <person name="Takahashi M."/>
            <person name="Kanda K."/>
            <person name="Yokoi T."/>
            <person name="Furuya T."/>
            <person name="Kikkawa E."/>
            <person name="Omura Y."/>
            <person name="Abe K."/>
            <person name="Kamihara K."/>
            <person name="Katsuta N."/>
            <person name="Sato K."/>
            <person name="Tanikawa M."/>
            <person name="Yamazaki M."/>
            <person name="Ninomiya K."/>
            <person name="Ishibashi T."/>
            <person name="Yamashita H."/>
            <person name="Murakawa K."/>
            <person name="Fujimori K."/>
            <person name="Tanai H."/>
            <person name="Kimata M."/>
            <person name="Watanabe M."/>
            <person name="Hiraoka S."/>
            <person name="Chiba Y."/>
            <person name="Ishida S."/>
            <person name="Ono Y."/>
            <person name="Takiguchi S."/>
            <person name="Watanabe S."/>
            <person name="Yosida M."/>
            <person name="Hotuta T."/>
            <person name="Kusano J."/>
            <person name="Kanehori K."/>
            <person name="Takahashi-Fujii A."/>
            <person name="Hara H."/>
            <person name="Tanase T.-O."/>
            <person name="Nomura Y."/>
            <person name="Togiya S."/>
            <person name="Komai F."/>
            <person name="Hara R."/>
            <person name="Takeuchi K."/>
            <person name="Arita M."/>
            <person name="Imose N."/>
            <person name="Musashino K."/>
            <person name="Yuuki H."/>
            <person name="Oshima A."/>
            <person name="Sasaki N."/>
            <person name="Aotsuka S."/>
            <person name="Yoshikawa Y."/>
            <person name="Matsunawa H."/>
            <person name="Ichihara T."/>
            <person name="Shiohata N."/>
            <person name="Sano S."/>
            <person name="Moriya S."/>
            <person name="Momiyama H."/>
            <person name="Satoh N."/>
            <person name="Takami S."/>
            <person name="Terashima Y."/>
            <person name="Suzuki O."/>
            <person name="Nakagawa S."/>
            <person name="Senoh A."/>
            <person name="Mizoguchi H."/>
            <person name="Goto Y."/>
            <person name="Shimizu F."/>
            <person name="Wakebe H."/>
            <person name="Hishigaki H."/>
            <person name="Watanabe T."/>
            <person name="Sugiyama A."/>
            <person name="Takemoto M."/>
            <person name="Kawakami B."/>
            <person name="Yamazaki M."/>
            <person name="Watanabe K."/>
            <person name="Kumagai A."/>
            <person name="Itakura S."/>
            <person name="Fukuzumi Y."/>
            <person name="Fujimori Y."/>
            <person name="Komiyama M."/>
            <person name="Tashiro H."/>
            <person name="Tanigami A."/>
            <person name="Fujiwara T."/>
            <person name="Ono T."/>
            <person name="Yamada K."/>
            <person name="Fujii Y."/>
            <person name="Ozaki K."/>
            <person name="Hirao M."/>
            <person name="Ohmori Y."/>
            <person name="Kawabata A."/>
            <person name="Hikiji T."/>
            <person name="Kobatake N."/>
            <person name="Inagaki H."/>
            <person name="Ikema Y."/>
            <person name="Okamoto S."/>
            <person name="Okitani R."/>
            <person name="Kawakami T."/>
            <person name="Noguchi S."/>
            <person name="Itoh T."/>
            <person name="Shigeta K."/>
            <person name="Senba T."/>
            <person name="Matsumura K."/>
            <person name="Nakajima Y."/>
            <person name="Mizuno T."/>
            <person name="Morinaga M."/>
            <person name="Sasaki M."/>
            <person name="Togashi T."/>
            <person name="Oyama M."/>
            <person name="Hata H."/>
            <person name="Watanabe M."/>
            <person name="Komatsu T."/>
            <person name="Mizushima-Sugano J."/>
            <person name="Satoh T."/>
            <person name="Shirai Y."/>
            <person name="Takahashi Y."/>
            <person name="Nakagawa K."/>
            <person name="Okumura K."/>
            <person name="Nagase T."/>
            <person name="Nomura N."/>
            <person name="Kikuchi H."/>
            <person name="Masuho Y."/>
            <person name="Yamashita R."/>
            <person name="Nakai K."/>
            <person name="Yada T."/>
            <person name="Nakamura Y."/>
            <person name="Ohara O."/>
            <person name="Isogai T."/>
            <person name="Sugano S."/>
        </authorList>
    </citation>
    <scope>NUCLEOTIDE SEQUENCE [LARGE SCALE MRNA] (ISOFORM 2)</scope>
    <source>
        <tissue>Teratocarcinoma</tissue>
        <tissue>Testis</tissue>
    </source>
</reference>
<reference key="4">
    <citation type="journal article" date="2003" name="Nature">
        <title>The DNA sequence of human chromosome 7.</title>
        <authorList>
            <person name="Hillier L.W."/>
            <person name="Fulton R.S."/>
            <person name="Fulton L.A."/>
            <person name="Graves T.A."/>
            <person name="Pepin K.H."/>
            <person name="Wagner-McPherson C."/>
            <person name="Layman D."/>
            <person name="Maas J."/>
            <person name="Jaeger S."/>
            <person name="Walker R."/>
            <person name="Wylie K."/>
            <person name="Sekhon M."/>
            <person name="Becker M.C."/>
            <person name="O'Laughlin M.D."/>
            <person name="Schaller M.E."/>
            <person name="Fewell G.A."/>
            <person name="Delehaunty K.D."/>
            <person name="Miner T.L."/>
            <person name="Nash W.E."/>
            <person name="Cordes M."/>
            <person name="Du H."/>
            <person name="Sun H."/>
            <person name="Edwards J."/>
            <person name="Bradshaw-Cordum H."/>
            <person name="Ali J."/>
            <person name="Andrews S."/>
            <person name="Isak A."/>
            <person name="Vanbrunt A."/>
            <person name="Nguyen C."/>
            <person name="Du F."/>
            <person name="Lamar B."/>
            <person name="Courtney L."/>
            <person name="Kalicki J."/>
            <person name="Ozersky P."/>
            <person name="Bielicki L."/>
            <person name="Scott K."/>
            <person name="Holmes A."/>
            <person name="Harkins R."/>
            <person name="Harris A."/>
            <person name="Strong C.M."/>
            <person name="Hou S."/>
            <person name="Tomlinson C."/>
            <person name="Dauphin-Kohlberg S."/>
            <person name="Kozlowicz-Reilly A."/>
            <person name="Leonard S."/>
            <person name="Rohlfing T."/>
            <person name="Rock S.M."/>
            <person name="Tin-Wollam A.-M."/>
            <person name="Abbott A."/>
            <person name="Minx P."/>
            <person name="Maupin R."/>
            <person name="Strowmatt C."/>
            <person name="Latreille P."/>
            <person name="Miller N."/>
            <person name="Johnson D."/>
            <person name="Murray J."/>
            <person name="Woessner J.P."/>
            <person name="Wendl M.C."/>
            <person name="Yang S.-P."/>
            <person name="Schultz B.R."/>
            <person name="Wallis J.W."/>
            <person name="Spieth J."/>
            <person name="Bieri T.A."/>
            <person name="Nelson J.O."/>
            <person name="Berkowicz N."/>
            <person name="Wohldmann P.E."/>
            <person name="Cook L.L."/>
            <person name="Hickenbotham M.T."/>
            <person name="Eldred J."/>
            <person name="Williams D."/>
            <person name="Bedell J.A."/>
            <person name="Mardis E.R."/>
            <person name="Clifton S.W."/>
            <person name="Chissoe S.L."/>
            <person name="Marra M.A."/>
            <person name="Raymond C."/>
            <person name="Haugen E."/>
            <person name="Gillett W."/>
            <person name="Zhou Y."/>
            <person name="James R."/>
            <person name="Phelps K."/>
            <person name="Iadanoto S."/>
            <person name="Bubb K."/>
            <person name="Simms E."/>
            <person name="Levy R."/>
            <person name="Clendenning J."/>
            <person name="Kaul R."/>
            <person name="Kent W.J."/>
            <person name="Furey T.S."/>
            <person name="Baertsch R.A."/>
            <person name="Brent M.R."/>
            <person name="Keibler E."/>
            <person name="Flicek P."/>
            <person name="Bork P."/>
            <person name="Suyama M."/>
            <person name="Bailey J.A."/>
            <person name="Portnoy M.E."/>
            <person name="Torrents D."/>
            <person name="Chinwalla A.T."/>
            <person name="Gish W.R."/>
            <person name="Eddy S.R."/>
            <person name="McPherson J.D."/>
            <person name="Olson M.V."/>
            <person name="Eichler E.E."/>
            <person name="Green E.D."/>
            <person name="Waterston R.H."/>
            <person name="Wilson R.K."/>
        </authorList>
    </citation>
    <scope>NUCLEOTIDE SEQUENCE [LARGE SCALE GENOMIC DNA]</scope>
</reference>
<reference key="5">
    <citation type="journal article" date="2004" name="Genome Res.">
        <title>The status, quality, and expansion of the NIH full-length cDNA project: the Mammalian Gene Collection (MGC).</title>
        <authorList>
            <consortium name="The MGC Project Team"/>
        </authorList>
    </citation>
    <scope>NUCLEOTIDE SEQUENCE [LARGE SCALE MRNA] (ISOFORM 2)</scope>
    <source>
        <tissue>Lymph</tissue>
        <tissue>Skin</tissue>
    </source>
</reference>
<reference key="6">
    <citation type="journal article" date="2007" name="FEBS Lett.">
        <title>Two distinct human POM121 genes: requirement for the formation of nuclear pore complexes.</title>
        <authorList>
            <person name="Funakoshi T."/>
            <person name="Maeshima K."/>
            <person name="Yahata K."/>
            <person name="Sugano S."/>
            <person name="Imamoto F."/>
            <person name="Imamoto N."/>
        </authorList>
    </citation>
    <scope>NUCLEOTIDE SEQUENCE [MRNA] OF 1-285 (ISOFORM 1)</scope>
    <scope>IDENTIFICATION BY MASS SPECTROMETRY</scope>
    <scope>FUNCTION</scope>
    <scope>SUBCELLULAR LOCATION</scope>
    <source>
        <tissue>Cervix</tissue>
    </source>
</reference>
<reference key="7">
    <citation type="journal article" date="2007" name="BMC Genomics">
        <title>The full-ORF clone resource of the German cDNA consortium.</title>
        <authorList>
            <person name="Bechtel S."/>
            <person name="Rosenfelder H."/>
            <person name="Duda A."/>
            <person name="Schmidt C.P."/>
            <person name="Ernst U."/>
            <person name="Wellenreuther R."/>
            <person name="Mehrle A."/>
            <person name="Schuster C."/>
            <person name="Bahr A."/>
            <person name="Bloecker H."/>
            <person name="Heubner D."/>
            <person name="Hoerlein A."/>
            <person name="Michel G."/>
            <person name="Wedler H."/>
            <person name="Koehrer K."/>
            <person name="Ottenwaelder B."/>
            <person name="Poustka A."/>
            <person name="Wiemann S."/>
            <person name="Schupp I."/>
        </authorList>
    </citation>
    <scope>NUCLEOTIDE SEQUENCE [LARGE SCALE MRNA] OF 1150-1249 (ISOFORM 1)</scope>
    <source>
        <tissue>Uterus</tissue>
    </source>
</reference>
<reference key="8">
    <citation type="journal article" date="2008" name="Proc. Natl. Acad. Sci. U.S.A.">
        <title>A quantitative atlas of mitotic phosphorylation.</title>
        <authorList>
            <person name="Dephoure N."/>
            <person name="Zhou C."/>
            <person name="Villen J."/>
            <person name="Beausoleil S.A."/>
            <person name="Bakalarski C.E."/>
            <person name="Elledge S.J."/>
            <person name="Gygi S.P."/>
        </authorList>
    </citation>
    <scope>PHOSPHORYLATION [LARGE SCALE ANALYSIS] AT SER-351</scope>
    <scope>IDENTIFICATION BY MASS SPECTROMETRY [LARGE SCALE ANALYSIS]</scope>
    <source>
        <tissue>Cervix carcinoma</tissue>
    </source>
</reference>
<reference key="9">
    <citation type="journal article" date="2009" name="Anal. Chem.">
        <title>Lys-N and trypsin cover complementary parts of the phosphoproteome in a refined SCX-based approach.</title>
        <authorList>
            <person name="Gauci S."/>
            <person name="Helbig A.O."/>
            <person name="Slijper M."/>
            <person name="Krijgsveld J."/>
            <person name="Heck A.J."/>
            <person name="Mohammed S."/>
        </authorList>
    </citation>
    <scope>IDENTIFICATION BY MASS SPECTROMETRY [LARGE SCALE ANALYSIS]</scope>
</reference>
<reference key="10">
    <citation type="journal article" date="2010" name="Sci. Signal.">
        <title>Quantitative phosphoproteomics reveals widespread full phosphorylation site occupancy during mitosis.</title>
        <authorList>
            <person name="Olsen J.V."/>
            <person name="Vermeulen M."/>
            <person name="Santamaria A."/>
            <person name="Kumar C."/>
            <person name="Miller M.L."/>
            <person name="Jensen L.J."/>
            <person name="Gnad F."/>
            <person name="Cox J."/>
            <person name="Jensen T.S."/>
            <person name="Nigg E.A."/>
            <person name="Brunak S."/>
            <person name="Mann M."/>
        </authorList>
    </citation>
    <scope>IDENTIFICATION BY MASS SPECTROMETRY [LARGE SCALE ANALYSIS]</scope>
    <source>
        <tissue>Cervix carcinoma</tissue>
    </source>
</reference>
<reference key="11">
    <citation type="journal article" date="2011" name="Sci. Signal.">
        <title>System-wide temporal characterization of the proteome and phosphoproteome of human embryonic stem cell differentiation.</title>
        <authorList>
            <person name="Rigbolt K.T."/>
            <person name="Prokhorova T.A."/>
            <person name="Akimov V."/>
            <person name="Henningsen J."/>
            <person name="Johansen P.T."/>
            <person name="Kratchmarova I."/>
            <person name="Kassem M."/>
            <person name="Mann M."/>
            <person name="Olsen J.V."/>
            <person name="Blagoev B."/>
        </authorList>
    </citation>
    <scope>PHOSPHORYLATION [LARGE SCALE ANALYSIS] AT SER-371</scope>
    <scope>IDENTIFICATION BY MASS SPECTROMETRY [LARGE SCALE ANALYSIS]</scope>
</reference>
<reference key="12">
    <citation type="journal article" date="2013" name="J. Proteome Res.">
        <title>Toward a comprehensive characterization of a human cancer cell phosphoproteome.</title>
        <authorList>
            <person name="Zhou H."/>
            <person name="Di Palma S."/>
            <person name="Preisinger C."/>
            <person name="Peng M."/>
            <person name="Polat A.N."/>
            <person name="Heck A.J."/>
            <person name="Mohammed S."/>
        </authorList>
    </citation>
    <scope>IDENTIFICATION BY MASS SPECTROMETRY [LARGE SCALE ANALYSIS]</scope>
    <source>
        <tissue>Erythroleukemia</tissue>
    </source>
</reference>